<protein>
    <recommendedName>
        <fullName evidence="1">ATP synthase subunit beta</fullName>
        <ecNumber evidence="1">7.1.2.2</ecNumber>
    </recommendedName>
    <alternativeName>
        <fullName evidence="1">ATP synthase F1 sector subunit beta</fullName>
    </alternativeName>
    <alternativeName>
        <fullName evidence="1">F-ATPase subunit beta</fullName>
    </alternativeName>
</protein>
<sequence>MAEGNVGKLVQIIGPVIDIRFSRENLPNLLNAIEIEGPDGKIVVEVSQHIGDDTVRCVAMKSTDGLVRGMEAKDTGGPITVPVGRATLGRIFNVIGEPVDEKGAVAAEAKAPIHRPAPSFEDQATSTEILETGIKVVDLIAPYLKGGKIGLFGGAGVGKTVLIMELINNIAKEHGGLSVFSGVGERTREGNDLYNEMIESGVIDKTALVYGQMNEPPGARMRVGLTGLTMAEHFRDEEGQDVLLFIDNIFRFTQAGSEVSALLGRMPSAVGYQPTLATEMGALQERITSTRKGSITSVQAVYVPADDLTDPAPATTFAHLDATTVLSRQIVELGIYPAVDPLDSNSRVLDPAIVGDEHYSVARGVQEVLQRYKELQDIIAILGMDELSDEDKLTVSRARKIQRFLSQPFSVAEQFTGMAGKYVPLKETIRGFKEILEGKHDDIPESAFLFVGSIDEAVEKAKGK</sequence>
<proteinExistence type="inferred from homology"/>
<accession>A8MJV9</accession>
<evidence type="ECO:0000255" key="1">
    <source>
        <dbReference type="HAMAP-Rule" id="MF_01347"/>
    </source>
</evidence>
<feature type="chain" id="PRO_1000073363" description="ATP synthase subunit beta">
    <location>
        <begin position="1"/>
        <end position="464"/>
    </location>
</feature>
<feature type="binding site" evidence="1">
    <location>
        <begin position="153"/>
        <end position="160"/>
    </location>
    <ligand>
        <name>ATP</name>
        <dbReference type="ChEBI" id="CHEBI:30616"/>
    </ligand>
</feature>
<keyword id="KW-0066">ATP synthesis</keyword>
<keyword id="KW-0067">ATP-binding</keyword>
<keyword id="KW-1003">Cell membrane</keyword>
<keyword id="KW-0139">CF(1)</keyword>
<keyword id="KW-0375">Hydrogen ion transport</keyword>
<keyword id="KW-0406">Ion transport</keyword>
<keyword id="KW-0472">Membrane</keyword>
<keyword id="KW-0547">Nucleotide-binding</keyword>
<keyword id="KW-1185">Reference proteome</keyword>
<keyword id="KW-1278">Translocase</keyword>
<keyword id="KW-0813">Transport</keyword>
<reference key="1">
    <citation type="submission" date="2007-10" db="EMBL/GenBank/DDBJ databases">
        <title>Complete genome of Alkaliphilus oremlandii OhILAs.</title>
        <authorList>
            <person name="Copeland A."/>
            <person name="Lucas S."/>
            <person name="Lapidus A."/>
            <person name="Barry K."/>
            <person name="Detter J.C."/>
            <person name="Glavina del Rio T."/>
            <person name="Hammon N."/>
            <person name="Israni S."/>
            <person name="Dalin E."/>
            <person name="Tice H."/>
            <person name="Pitluck S."/>
            <person name="Chain P."/>
            <person name="Malfatti S."/>
            <person name="Shin M."/>
            <person name="Vergez L."/>
            <person name="Schmutz J."/>
            <person name="Larimer F."/>
            <person name="Land M."/>
            <person name="Hauser L."/>
            <person name="Kyrpides N."/>
            <person name="Mikhailova N."/>
            <person name="Stolz J.F."/>
            <person name="Dawson A."/>
            <person name="Fisher E."/>
            <person name="Crable B."/>
            <person name="Perera E."/>
            <person name="Lisak J."/>
            <person name="Ranganathan M."/>
            <person name="Basu P."/>
            <person name="Richardson P."/>
        </authorList>
    </citation>
    <scope>NUCLEOTIDE SEQUENCE [LARGE SCALE GENOMIC DNA]</scope>
    <source>
        <strain>OhILAs</strain>
    </source>
</reference>
<gene>
    <name evidence="1" type="primary">atpD</name>
    <name type="ordered locus">Clos_2560</name>
</gene>
<organism>
    <name type="scientific">Alkaliphilus oremlandii (strain OhILAs)</name>
    <name type="common">Clostridium oremlandii (strain OhILAs)</name>
    <dbReference type="NCBI Taxonomy" id="350688"/>
    <lineage>
        <taxon>Bacteria</taxon>
        <taxon>Bacillati</taxon>
        <taxon>Bacillota</taxon>
        <taxon>Clostridia</taxon>
        <taxon>Peptostreptococcales</taxon>
        <taxon>Natronincolaceae</taxon>
        <taxon>Alkaliphilus</taxon>
    </lineage>
</organism>
<dbReference type="EC" id="7.1.2.2" evidence="1"/>
<dbReference type="EMBL" id="CP000853">
    <property type="protein sequence ID" value="ABW20091.1"/>
    <property type="molecule type" value="Genomic_DNA"/>
</dbReference>
<dbReference type="RefSeq" id="WP_012160398.1">
    <property type="nucleotide sequence ID" value="NC_009922.1"/>
</dbReference>
<dbReference type="SMR" id="A8MJV9"/>
<dbReference type="STRING" id="350688.Clos_2560"/>
<dbReference type="KEGG" id="aoe:Clos_2560"/>
<dbReference type="eggNOG" id="COG0055">
    <property type="taxonomic scope" value="Bacteria"/>
</dbReference>
<dbReference type="HOGENOM" id="CLU_022398_0_2_9"/>
<dbReference type="OrthoDB" id="9801639at2"/>
<dbReference type="Proteomes" id="UP000000269">
    <property type="component" value="Chromosome"/>
</dbReference>
<dbReference type="GO" id="GO:0005886">
    <property type="term" value="C:plasma membrane"/>
    <property type="evidence" value="ECO:0007669"/>
    <property type="project" value="UniProtKB-SubCell"/>
</dbReference>
<dbReference type="GO" id="GO:0045259">
    <property type="term" value="C:proton-transporting ATP synthase complex"/>
    <property type="evidence" value="ECO:0007669"/>
    <property type="project" value="UniProtKB-KW"/>
</dbReference>
<dbReference type="GO" id="GO:0005524">
    <property type="term" value="F:ATP binding"/>
    <property type="evidence" value="ECO:0007669"/>
    <property type="project" value="UniProtKB-UniRule"/>
</dbReference>
<dbReference type="GO" id="GO:0016887">
    <property type="term" value="F:ATP hydrolysis activity"/>
    <property type="evidence" value="ECO:0007669"/>
    <property type="project" value="InterPro"/>
</dbReference>
<dbReference type="GO" id="GO:0046933">
    <property type="term" value="F:proton-transporting ATP synthase activity, rotational mechanism"/>
    <property type="evidence" value="ECO:0007669"/>
    <property type="project" value="UniProtKB-UniRule"/>
</dbReference>
<dbReference type="CDD" id="cd18110">
    <property type="entry name" value="ATP-synt_F1_beta_C"/>
    <property type="match status" value="1"/>
</dbReference>
<dbReference type="CDD" id="cd18115">
    <property type="entry name" value="ATP-synt_F1_beta_N"/>
    <property type="match status" value="1"/>
</dbReference>
<dbReference type="CDD" id="cd01133">
    <property type="entry name" value="F1-ATPase_beta_CD"/>
    <property type="match status" value="1"/>
</dbReference>
<dbReference type="FunFam" id="1.10.1140.10:FF:000001">
    <property type="entry name" value="ATP synthase subunit beta"/>
    <property type="match status" value="1"/>
</dbReference>
<dbReference type="FunFam" id="2.40.10.170:FF:000005">
    <property type="entry name" value="ATP synthase subunit beta"/>
    <property type="match status" value="1"/>
</dbReference>
<dbReference type="FunFam" id="3.40.50.300:FF:000026">
    <property type="entry name" value="ATP synthase subunit beta"/>
    <property type="match status" value="1"/>
</dbReference>
<dbReference type="Gene3D" id="2.40.10.170">
    <property type="match status" value="1"/>
</dbReference>
<dbReference type="Gene3D" id="1.10.1140.10">
    <property type="entry name" value="Bovine Mitochondrial F1-atpase, Atp Synthase Beta Chain, Chain D, domain 3"/>
    <property type="match status" value="1"/>
</dbReference>
<dbReference type="Gene3D" id="3.40.50.300">
    <property type="entry name" value="P-loop containing nucleotide triphosphate hydrolases"/>
    <property type="match status" value="1"/>
</dbReference>
<dbReference type="HAMAP" id="MF_01347">
    <property type="entry name" value="ATP_synth_beta_bact"/>
    <property type="match status" value="1"/>
</dbReference>
<dbReference type="InterPro" id="IPR003593">
    <property type="entry name" value="AAA+_ATPase"/>
</dbReference>
<dbReference type="InterPro" id="IPR055190">
    <property type="entry name" value="ATP-synt_VA_C"/>
</dbReference>
<dbReference type="InterPro" id="IPR005722">
    <property type="entry name" value="ATP_synth_F1_bsu"/>
</dbReference>
<dbReference type="InterPro" id="IPR020003">
    <property type="entry name" value="ATPase_a/bsu_AS"/>
</dbReference>
<dbReference type="InterPro" id="IPR050053">
    <property type="entry name" value="ATPase_alpha/beta_chains"/>
</dbReference>
<dbReference type="InterPro" id="IPR004100">
    <property type="entry name" value="ATPase_F1/V1/A1_a/bsu_N"/>
</dbReference>
<dbReference type="InterPro" id="IPR036121">
    <property type="entry name" value="ATPase_F1/V1/A1_a/bsu_N_sf"/>
</dbReference>
<dbReference type="InterPro" id="IPR000194">
    <property type="entry name" value="ATPase_F1/V1/A1_a/bsu_nucl-bd"/>
</dbReference>
<dbReference type="InterPro" id="IPR024034">
    <property type="entry name" value="ATPase_F1/V1_b/a_C"/>
</dbReference>
<dbReference type="InterPro" id="IPR027417">
    <property type="entry name" value="P-loop_NTPase"/>
</dbReference>
<dbReference type="NCBIfam" id="TIGR01039">
    <property type="entry name" value="atpD"/>
    <property type="match status" value="1"/>
</dbReference>
<dbReference type="PANTHER" id="PTHR15184">
    <property type="entry name" value="ATP SYNTHASE"/>
    <property type="match status" value="1"/>
</dbReference>
<dbReference type="PANTHER" id="PTHR15184:SF71">
    <property type="entry name" value="ATP SYNTHASE SUBUNIT BETA, MITOCHONDRIAL"/>
    <property type="match status" value="1"/>
</dbReference>
<dbReference type="Pfam" id="PF00006">
    <property type="entry name" value="ATP-synt_ab"/>
    <property type="match status" value="1"/>
</dbReference>
<dbReference type="Pfam" id="PF02874">
    <property type="entry name" value="ATP-synt_ab_N"/>
    <property type="match status" value="1"/>
</dbReference>
<dbReference type="Pfam" id="PF22919">
    <property type="entry name" value="ATP-synt_VA_C"/>
    <property type="match status" value="1"/>
</dbReference>
<dbReference type="PIRSF" id="PIRSF039072">
    <property type="entry name" value="ATPase_subunit_beta"/>
    <property type="match status" value="1"/>
</dbReference>
<dbReference type="SMART" id="SM00382">
    <property type="entry name" value="AAA"/>
    <property type="match status" value="1"/>
</dbReference>
<dbReference type="SUPFAM" id="SSF47917">
    <property type="entry name" value="C-terminal domain of alpha and beta subunits of F1 ATP synthase"/>
    <property type="match status" value="1"/>
</dbReference>
<dbReference type="SUPFAM" id="SSF50615">
    <property type="entry name" value="N-terminal domain of alpha and beta subunits of F1 ATP synthase"/>
    <property type="match status" value="1"/>
</dbReference>
<dbReference type="SUPFAM" id="SSF52540">
    <property type="entry name" value="P-loop containing nucleoside triphosphate hydrolases"/>
    <property type="match status" value="1"/>
</dbReference>
<dbReference type="PROSITE" id="PS00152">
    <property type="entry name" value="ATPASE_ALPHA_BETA"/>
    <property type="match status" value="1"/>
</dbReference>
<name>ATPB_ALKOO</name>
<comment type="function">
    <text evidence="1">Produces ATP from ADP in the presence of a proton gradient across the membrane. The catalytic sites are hosted primarily by the beta subunits.</text>
</comment>
<comment type="catalytic activity">
    <reaction evidence="1">
        <text>ATP + H2O + 4 H(+)(in) = ADP + phosphate + 5 H(+)(out)</text>
        <dbReference type="Rhea" id="RHEA:57720"/>
        <dbReference type="ChEBI" id="CHEBI:15377"/>
        <dbReference type="ChEBI" id="CHEBI:15378"/>
        <dbReference type="ChEBI" id="CHEBI:30616"/>
        <dbReference type="ChEBI" id="CHEBI:43474"/>
        <dbReference type="ChEBI" id="CHEBI:456216"/>
        <dbReference type="EC" id="7.1.2.2"/>
    </reaction>
</comment>
<comment type="subunit">
    <text evidence="1">F-type ATPases have 2 components, CF(1) - the catalytic core - and CF(0) - the membrane proton channel. CF(1) has five subunits: alpha(3), beta(3), gamma(1), delta(1), epsilon(1). CF(0) has three main subunits: a(1), b(2) and c(9-12). The alpha and beta chains form an alternating ring which encloses part of the gamma chain. CF(1) is attached to CF(0) by a central stalk formed by the gamma and epsilon chains, while a peripheral stalk is formed by the delta and b chains.</text>
</comment>
<comment type="subcellular location">
    <subcellularLocation>
        <location evidence="1">Cell membrane</location>
        <topology evidence="1">Peripheral membrane protein</topology>
    </subcellularLocation>
</comment>
<comment type="similarity">
    <text evidence="1">Belongs to the ATPase alpha/beta chains family.</text>
</comment>